<protein>
    <recommendedName>
        <fullName evidence="1">Protease HtpX</fullName>
        <ecNumber evidence="1">3.4.24.-</ecNumber>
    </recommendedName>
    <alternativeName>
        <fullName evidence="1">Heat shock protein HtpX</fullName>
    </alternativeName>
</protein>
<proteinExistence type="inferred from homology"/>
<accession>Q88LQ8</accession>
<evidence type="ECO:0000255" key="1">
    <source>
        <dbReference type="HAMAP-Rule" id="MF_00188"/>
    </source>
</evidence>
<gene>
    <name evidence="1" type="primary">htpX</name>
    <name type="ordered locus">PP_1871</name>
</gene>
<organism>
    <name type="scientific">Pseudomonas putida (strain ATCC 47054 / DSM 6125 / CFBP 8728 / NCIMB 11950 / KT2440)</name>
    <dbReference type="NCBI Taxonomy" id="160488"/>
    <lineage>
        <taxon>Bacteria</taxon>
        <taxon>Pseudomonadati</taxon>
        <taxon>Pseudomonadota</taxon>
        <taxon>Gammaproteobacteria</taxon>
        <taxon>Pseudomonadales</taxon>
        <taxon>Pseudomonadaceae</taxon>
        <taxon>Pseudomonas</taxon>
    </lineage>
</organism>
<sequence>MMRILLFVATNLAVVLVASITLSLFGFNGFMAANGVDLNLSSLLVFCAVFGFAGSLVSLFISKWMAKMTTGTQIISQPRTRHEQWLLQTVEELSREAGIKMPEVGIFPAYEANAFATGWNRNDALVAVSQGLLERFSPDEVRAVLAHEIGHVANGDMVTLALVQGVVNTFVMFFARIIGNFVDKVIFKNEEGQGIAYYVATIVAELILGILASMIVMWFSRRREFRADEAGAQLAGTAAMIGALQRLRVEQGLPVHMPDTMKAFGINGGLKHGLAGLLMSHPPLEDRIEALRQRG</sequence>
<reference key="1">
    <citation type="journal article" date="2002" name="Environ. Microbiol.">
        <title>Complete genome sequence and comparative analysis of the metabolically versatile Pseudomonas putida KT2440.</title>
        <authorList>
            <person name="Nelson K.E."/>
            <person name="Weinel C."/>
            <person name="Paulsen I.T."/>
            <person name="Dodson R.J."/>
            <person name="Hilbert H."/>
            <person name="Martins dos Santos V.A.P."/>
            <person name="Fouts D.E."/>
            <person name="Gill S.R."/>
            <person name="Pop M."/>
            <person name="Holmes M."/>
            <person name="Brinkac L.M."/>
            <person name="Beanan M.J."/>
            <person name="DeBoy R.T."/>
            <person name="Daugherty S.C."/>
            <person name="Kolonay J.F."/>
            <person name="Madupu R."/>
            <person name="Nelson W.C."/>
            <person name="White O."/>
            <person name="Peterson J.D."/>
            <person name="Khouri H.M."/>
            <person name="Hance I."/>
            <person name="Chris Lee P."/>
            <person name="Holtzapple E.K."/>
            <person name="Scanlan D."/>
            <person name="Tran K."/>
            <person name="Moazzez A."/>
            <person name="Utterback T.R."/>
            <person name="Rizzo M."/>
            <person name="Lee K."/>
            <person name="Kosack D."/>
            <person name="Moestl D."/>
            <person name="Wedler H."/>
            <person name="Lauber J."/>
            <person name="Stjepandic D."/>
            <person name="Hoheisel J."/>
            <person name="Straetz M."/>
            <person name="Heim S."/>
            <person name="Kiewitz C."/>
            <person name="Eisen J.A."/>
            <person name="Timmis K.N."/>
            <person name="Duesterhoeft A."/>
            <person name="Tuemmler B."/>
            <person name="Fraser C.M."/>
        </authorList>
    </citation>
    <scope>NUCLEOTIDE SEQUENCE [LARGE SCALE GENOMIC DNA]</scope>
    <source>
        <strain>ATCC 47054 / DSM 6125 / CFBP 8728 / NCIMB 11950 / KT2440</strain>
    </source>
</reference>
<name>HTPX_PSEPK</name>
<keyword id="KW-0997">Cell inner membrane</keyword>
<keyword id="KW-1003">Cell membrane</keyword>
<keyword id="KW-0378">Hydrolase</keyword>
<keyword id="KW-0472">Membrane</keyword>
<keyword id="KW-0479">Metal-binding</keyword>
<keyword id="KW-0482">Metalloprotease</keyword>
<keyword id="KW-0645">Protease</keyword>
<keyword id="KW-1185">Reference proteome</keyword>
<keyword id="KW-0812">Transmembrane</keyword>
<keyword id="KW-1133">Transmembrane helix</keyword>
<keyword id="KW-0862">Zinc</keyword>
<comment type="cofactor">
    <cofactor evidence="1">
        <name>Zn(2+)</name>
        <dbReference type="ChEBI" id="CHEBI:29105"/>
    </cofactor>
    <text evidence="1">Binds 1 zinc ion per subunit.</text>
</comment>
<comment type="subcellular location">
    <subcellularLocation>
        <location evidence="1">Cell inner membrane</location>
        <topology evidence="1">Multi-pass membrane protein</topology>
    </subcellularLocation>
</comment>
<comment type="similarity">
    <text evidence="1">Belongs to the peptidase M48B family.</text>
</comment>
<dbReference type="EC" id="3.4.24.-" evidence="1"/>
<dbReference type="EMBL" id="AE015451">
    <property type="protein sequence ID" value="AAN67490.1"/>
    <property type="molecule type" value="Genomic_DNA"/>
</dbReference>
<dbReference type="RefSeq" id="NP_744026.1">
    <property type="nucleotide sequence ID" value="NC_002947.4"/>
</dbReference>
<dbReference type="RefSeq" id="WP_010952899.1">
    <property type="nucleotide sequence ID" value="NZ_CP169744.1"/>
</dbReference>
<dbReference type="SMR" id="Q88LQ8"/>
<dbReference type="STRING" id="160488.PP_1871"/>
<dbReference type="MEROPS" id="M48.002"/>
<dbReference type="PaxDb" id="160488-PP_1871"/>
<dbReference type="GeneID" id="83681592"/>
<dbReference type="KEGG" id="ppu:PP_1871"/>
<dbReference type="PATRIC" id="fig|160488.4.peg.1973"/>
<dbReference type="eggNOG" id="COG0501">
    <property type="taxonomic scope" value="Bacteria"/>
</dbReference>
<dbReference type="HOGENOM" id="CLU_042266_1_0_6"/>
<dbReference type="OrthoDB" id="15218at2"/>
<dbReference type="PhylomeDB" id="Q88LQ8"/>
<dbReference type="BioCyc" id="PPUT160488:G1G01-1975-MONOMER"/>
<dbReference type="Proteomes" id="UP000000556">
    <property type="component" value="Chromosome"/>
</dbReference>
<dbReference type="GO" id="GO:0005886">
    <property type="term" value="C:plasma membrane"/>
    <property type="evidence" value="ECO:0007669"/>
    <property type="project" value="UniProtKB-SubCell"/>
</dbReference>
<dbReference type="GO" id="GO:0004222">
    <property type="term" value="F:metalloendopeptidase activity"/>
    <property type="evidence" value="ECO:0007669"/>
    <property type="project" value="UniProtKB-UniRule"/>
</dbReference>
<dbReference type="GO" id="GO:0008270">
    <property type="term" value="F:zinc ion binding"/>
    <property type="evidence" value="ECO:0007669"/>
    <property type="project" value="UniProtKB-UniRule"/>
</dbReference>
<dbReference type="GO" id="GO:0006508">
    <property type="term" value="P:proteolysis"/>
    <property type="evidence" value="ECO:0007669"/>
    <property type="project" value="UniProtKB-KW"/>
</dbReference>
<dbReference type="CDD" id="cd07335">
    <property type="entry name" value="M48B_HtpX_like"/>
    <property type="match status" value="1"/>
</dbReference>
<dbReference type="Gene3D" id="3.30.2010.10">
    <property type="entry name" value="Metalloproteases ('zincins'), catalytic domain"/>
    <property type="match status" value="1"/>
</dbReference>
<dbReference type="HAMAP" id="MF_00188">
    <property type="entry name" value="Pept_M48_protease_HtpX"/>
    <property type="match status" value="1"/>
</dbReference>
<dbReference type="InterPro" id="IPR050083">
    <property type="entry name" value="HtpX_protease"/>
</dbReference>
<dbReference type="InterPro" id="IPR022919">
    <property type="entry name" value="Pept_M48_protease_HtpX"/>
</dbReference>
<dbReference type="InterPro" id="IPR001915">
    <property type="entry name" value="Peptidase_M48"/>
</dbReference>
<dbReference type="NCBIfam" id="NF003965">
    <property type="entry name" value="PRK05457.1"/>
    <property type="match status" value="1"/>
</dbReference>
<dbReference type="PANTHER" id="PTHR43221">
    <property type="entry name" value="PROTEASE HTPX"/>
    <property type="match status" value="1"/>
</dbReference>
<dbReference type="PANTHER" id="PTHR43221:SF1">
    <property type="entry name" value="PROTEASE HTPX"/>
    <property type="match status" value="1"/>
</dbReference>
<dbReference type="Pfam" id="PF01435">
    <property type="entry name" value="Peptidase_M48"/>
    <property type="match status" value="1"/>
</dbReference>
<feature type="chain" id="PRO_0000138881" description="Protease HtpX">
    <location>
        <begin position="1"/>
        <end position="295"/>
    </location>
</feature>
<feature type="transmembrane region" description="Helical" evidence="1">
    <location>
        <begin position="4"/>
        <end position="24"/>
    </location>
</feature>
<feature type="transmembrane region" description="Helical" evidence="1">
    <location>
        <begin position="41"/>
        <end position="61"/>
    </location>
</feature>
<feature type="transmembrane region" description="Helical" evidence="1">
    <location>
        <begin position="158"/>
        <end position="178"/>
    </location>
</feature>
<feature type="transmembrane region" description="Helical" evidence="1">
    <location>
        <begin position="199"/>
        <end position="219"/>
    </location>
</feature>
<feature type="active site" evidence="1">
    <location>
        <position position="148"/>
    </location>
</feature>
<feature type="binding site" evidence="1">
    <location>
        <position position="147"/>
    </location>
    <ligand>
        <name>Zn(2+)</name>
        <dbReference type="ChEBI" id="CHEBI:29105"/>
        <note>catalytic</note>
    </ligand>
</feature>
<feature type="binding site" evidence="1">
    <location>
        <position position="151"/>
    </location>
    <ligand>
        <name>Zn(2+)</name>
        <dbReference type="ChEBI" id="CHEBI:29105"/>
        <note>catalytic</note>
    </ligand>
</feature>
<feature type="binding site" evidence="1">
    <location>
        <position position="224"/>
    </location>
    <ligand>
        <name>Zn(2+)</name>
        <dbReference type="ChEBI" id="CHEBI:29105"/>
        <note>catalytic</note>
    </ligand>
</feature>